<name>031R_FRG3G</name>
<organismHost>
    <name type="scientific">Dryophytes versicolor</name>
    <name type="common">chameleon treefrog</name>
    <dbReference type="NCBI Taxonomy" id="30343"/>
</organismHost>
<organismHost>
    <name type="scientific">Lithobates pipiens</name>
    <name type="common">Northern leopard frog</name>
    <name type="synonym">Rana pipiens</name>
    <dbReference type="NCBI Taxonomy" id="8404"/>
</organismHost>
<organismHost>
    <name type="scientific">Lithobates sylvaticus</name>
    <name type="common">Wood frog</name>
    <name type="synonym">Rana sylvatica</name>
    <dbReference type="NCBI Taxonomy" id="45438"/>
</organismHost>
<organismHost>
    <name type="scientific">Notophthalmus viridescens</name>
    <name type="common">Eastern newt</name>
    <name type="synonym">Triturus viridescens</name>
    <dbReference type="NCBI Taxonomy" id="8316"/>
</organismHost>
<sequence>MDTPCKLFCIELKEGYVPGTVSHNHMMPYFLAGSGWPVEITFHAATVELKTQEDFPPAIGIGIHNMTGVPVVETPHSGRMHFVFIFHSKSGRFSATYKCIPVPVVVRDYKTVASVSLTTLSLEDIVGVKLFGTACDRSS</sequence>
<feature type="chain" id="PRO_0000410533" description="Uncharacterized protein 031R">
    <location>
        <begin position="1"/>
        <end position="139"/>
    </location>
</feature>
<proteinExistence type="predicted"/>
<organism>
    <name type="scientific">Frog virus 3 (isolate Goorha)</name>
    <name type="common">FV-3</name>
    <dbReference type="NCBI Taxonomy" id="654924"/>
    <lineage>
        <taxon>Viruses</taxon>
        <taxon>Varidnaviria</taxon>
        <taxon>Bamfordvirae</taxon>
        <taxon>Nucleocytoviricota</taxon>
        <taxon>Megaviricetes</taxon>
        <taxon>Pimascovirales</taxon>
        <taxon>Iridoviridae</taxon>
        <taxon>Alphairidovirinae</taxon>
        <taxon>Ranavirus</taxon>
        <taxon>Frog virus 3</taxon>
    </lineage>
</organism>
<dbReference type="EMBL" id="AY548484">
    <property type="protein sequence ID" value="AAT09690.1"/>
    <property type="molecule type" value="Genomic_DNA"/>
</dbReference>
<dbReference type="RefSeq" id="YP_031609.1">
    <property type="nucleotide sequence ID" value="NC_005946.1"/>
</dbReference>
<dbReference type="SMR" id="Q6GZU5"/>
<dbReference type="KEGG" id="vg:2947751"/>
<dbReference type="Proteomes" id="UP000008770">
    <property type="component" value="Segment"/>
</dbReference>
<protein>
    <recommendedName>
        <fullName>Uncharacterized protein 031R</fullName>
    </recommendedName>
</protein>
<keyword id="KW-1185">Reference proteome</keyword>
<accession>Q6GZU5</accession>
<gene>
    <name type="ORF">FV3-031R</name>
</gene>
<reference key="1">
    <citation type="journal article" date="2004" name="Virology">
        <title>Comparative genomic analyses of frog virus 3, type species of the genus Ranavirus (family Iridoviridae).</title>
        <authorList>
            <person name="Tan W.G."/>
            <person name="Barkman T.J."/>
            <person name="Gregory Chinchar V."/>
            <person name="Essani K."/>
        </authorList>
    </citation>
    <scope>NUCLEOTIDE SEQUENCE [LARGE SCALE GENOMIC DNA]</scope>
</reference>